<organism>
    <name type="scientific">Escherichia coli (strain SMS-3-5 / SECEC)</name>
    <dbReference type="NCBI Taxonomy" id="439855"/>
    <lineage>
        <taxon>Bacteria</taxon>
        <taxon>Pseudomonadati</taxon>
        <taxon>Pseudomonadota</taxon>
        <taxon>Gammaproteobacteria</taxon>
        <taxon>Enterobacterales</taxon>
        <taxon>Enterobacteriaceae</taxon>
        <taxon>Escherichia</taxon>
    </lineage>
</organism>
<sequence>MTEAMKITLSTQPADARWGEKATYSINNDGITLHLNGADDLGLIQRAARKIDGLGIKHVQLSGEGWDADRCWAFWQGYKAPKGTRKVEWPDLDDVQRQELDNRLMIIDWVRDTINAPAEELGPSQLAQRAVDLISNVAGDRVTYRITKGEDLRDQGYMGLHTVGRGSERSPVLLALDYNPTGDKEAPVYACLVGKGITFDSGGYSIKQTAFMDSMKSDMGGAATVTGALAFAITRGLNKRVKLFLCCADNLISGNAFKLGDIITYRNGKKVEVMNTDAEGRLVLADGLIDASAQKPELIIDAATLTGAAKTALGNDYHALFSFDDALAGRLLASAAQENEPFWRLPLAEFHRSQLPSNFAELNNTGSAAYPAGASTAAGFLSHFVENYQQGWLHIDCSATYRKAPVEQWSAGATGLGVRTIANLLTA</sequence>
<feature type="chain" id="PRO_1000127009" description="Peptidase B">
    <location>
        <begin position="1"/>
        <end position="427"/>
    </location>
</feature>
<feature type="active site" evidence="1">
    <location>
        <position position="207"/>
    </location>
</feature>
<feature type="active site" evidence="1">
    <location>
        <position position="281"/>
    </location>
</feature>
<feature type="binding site" evidence="1">
    <location>
        <position position="195"/>
    </location>
    <ligand>
        <name>Mn(2+)</name>
        <dbReference type="ChEBI" id="CHEBI:29035"/>
        <label>2</label>
    </ligand>
</feature>
<feature type="binding site" evidence="1">
    <location>
        <position position="200"/>
    </location>
    <ligand>
        <name>Mn(2+)</name>
        <dbReference type="ChEBI" id="CHEBI:29035"/>
        <label>1</label>
    </ligand>
</feature>
<feature type="binding site" evidence="1">
    <location>
        <position position="200"/>
    </location>
    <ligand>
        <name>Mn(2+)</name>
        <dbReference type="ChEBI" id="CHEBI:29035"/>
        <label>2</label>
    </ligand>
</feature>
<feature type="binding site" evidence="1">
    <location>
        <position position="218"/>
    </location>
    <ligand>
        <name>Mn(2+)</name>
        <dbReference type="ChEBI" id="CHEBI:29035"/>
        <label>2</label>
    </ligand>
</feature>
<feature type="binding site" evidence="1">
    <location>
        <position position="277"/>
    </location>
    <ligand>
        <name>Mn(2+)</name>
        <dbReference type="ChEBI" id="CHEBI:29035"/>
        <label>1</label>
    </ligand>
</feature>
<feature type="binding site" evidence="1">
    <location>
        <position position="279"/>
    </location>
    <ligand>
        <name>Mn(2+)</name>
        <dbReference type="ChEBI" id="CHEBI:29035"/>
        <label>1</label>
    </ligand>
</feature>
<feature type="binding site" evidence="1">
    <location>
        <position position="279"/>
    </location>
    <ligand>
        <name>Mn(2+)</name>
        <dbReference type="ChEBI" id="CHEBI:29035"/>
        <label>2</label>
    </ligand>
</feature>
<protein>
    <recommendedName>
        <fullName evidence="1">Peptidase B</fullName>
        <ecNumber evidence="1">3.4.11.23</ecNumber>
    </recommendedName>
    <alternativeName>
        <fullName evidence="1">Aminopeptidase B</fullName>
    </alternativeName>
</protein>
<accession>B1LNH8</accession>
<gene>
    <name evidence="1" type="primary">pepB</name>
    <name type="ordered locus">EcSMS35_2675</name>
</gene>
<name>PEPB_ECOSM</name>
<proteinExistence type="inferred from homology"/>
<dbReference type="EC" id="3.4.11.23" evidence="1"/>
<dbReference type="EMBL" id="CP000970">
    <property type="protein sequence ID" value="ACB17161.1"/>
    <property type="molecule type" value="Genomic_DNA"/>
</dbReference>
<dbReference type="RefSeq" id="WP_000133588.1">
    <property type="nucleotide sequence ID" value="NC_010498.1"/>
</dbReference>
<dbReference type="SMR" id="B1LNH8"/>
<dbReference type="MEROPS" id="M17.004"/>
<dbReference type="KEGG" id="ecm:EcSMS35_2675"/>
<dbReference type="HOGENOM" id="CLU_013734_7_1_6"/>
<dbReference type="Proteomes" id="UP000007011">
    <property type="component" value="Chromosome"/>
</dbReference>
<dbReference type="GO" id="GO:0005737">
    <property type="term" value="C:cytoplasm"/>
    <property type="evidence" value="ECO:0007669"/>
    <property type="project" value="UniProtKB-SubCell"/>
</dbReference>
<dbReference type="GO" id="GO:0030145">
    <property type="term" value="F:manganese ion binding"/>
    <property type="evidence" value="ECO:0007669"/>
    <property type="project" value="UniProtKB-UniRule"/>
</dbReference>
<dbReference type="GO" id="GO:0070006">
    <property type="term" value="F:metalloaminopeptidase activity"/>
    <property type="evidence" value="ECO:0007669"/>
    <property type="project" value="InterPro"/>
</dbReference>
<dbReference type="GO" id="GO:0006508">
    <property type="term" value="P:proteolysis"/>
    <property type="evidence" value="ECO:0007669"/>
    <property type="project" value="UniProtKB-UniRule"/>
</dbReference>
<dbReference type="CDD" id="cd00433">
    <property type="entry name" value="Peptidase_M17"/>
    <property type="match status" value="1"/>
</dbReference>
<dbReference type="FunFam" id="3.40.630.10:FF:000037">
    <property type="entry name" value="Peptidase B"/>
    <property type="match status" value="1"/>
</dbReference>
<dbReference type="Gene3D" id="3.40.630.10">
    <property type="entry name" value="Zn peptidases"/>
    <property type="match status" value="1"/>
</dbReference>
<dbReference type="HAMAP" id="MF_00504">
    <property type="entry name" value="Aminopeptidase_M17"/>
    <property type="match status" value="1"/>
</dbReference>
<dbReference type="InterPro" id="IPR011356">
    <property type="entry name" value="Leucine_aapep/pepB"/>
</dbReference>
<dbReference type="InterPro" id="IPR047620">
    <property type="entry name" value="M17_PepB-like_N"/>
</dbReference>
<dbReference type="InterPro" id="IPR008330">
    <property type="entry name" value="Pept_M17_PepB"/>
</dbReference>
<dbReference type="InterPro" id="IPR000819">
    <property type="entry name" value="Peptidase_M17_C"/>
</dbReference>
<dbReference type="NCBIfam" id="NF003450">
    <property type="entry name" value="PRK05015.1"/>
    <property type="match status" value="1"/>
</dbReference>
<dbReference type="PANTHER" id="PTHR11963">
    <property type="entry name" value="LEUCINE AMINOPEPTIDASE-RELATED"/>
    <property type="match status" value="1"/>
</dbReference>
<dbReference type="PANTHER" id="PTHR11963:SF20">
    <property type="entry name" value="PEPTIDASE B"/>
    <property type="match status" value="1"/>
</dbReference>
<dbReference type="Pfam" id="PF12404">
    <property type="entry name" value="DUF3663"/>
    <property type="match status" value="1"/>
</dbReference>
<dbReference type="Pfam" id="PF00883">
    <property type="entry name" value="Peptidase_M17"/>
    <property type="match status" value="1"/>
</dbReference>
<dbReference type="PIRSF" id="PIRSF036388">
    <property type="entry name" value="Ctsl_amnpptdse_B"/>
    <property type="match status" value="1"/>
</dbReference>
<dbReference type="PRINTS" id="PR00481">
    <property type="entry name" value="LAMNOPPTDASE"/>
</dbReference>
<dbReference type="SUPFAM" id="SSF53187">
    <property type="entry name" value="Zn-dependent exopeptidases"/>
    <property type="match status" value="1"/>
</dbReference>
<dbReference type="PROSITE" id="PS00631">
    <property type="entry name" value="CYTOSOL_AP"/>
    <property type="match status" value="1"/>
</dbReference>
<keyword id="KW-0031">Aminopeptidase</keyword>
<keyword id="KW-0963">Cytoplasm</keyword>
<keyword id="KW-0378">Hydrolase</keyword>
<keyword id="KW-0464">Manganese</keyword>
<keyword id="KW-0479">Metal-binding</keyword>
<keyword id="KW-0645">Protease</keyword>
<evidence type="ECO:0000255" key="1">
    <source>
        <dbReference type="HAMAP-Rule" id="MF_00504"/>
    </source>
</evidence>
<comment type="function">
    <text evidence="1">Probably plays an important role in intracellular peptide degradation.</text>
</comment>
<comment type="catalytic activity">
    <reaction evidence="1">
        <text>Release of an N-terminal amino acid, Xaa, from a peptide or arylamide. Xaa is preferably Glu or Asp but may be other amino acids, including Leu, Met, His, Cys and Gln.</text>
        <dbReference type="EC" id="3.4.11.23"/>
    </reaction>
</comment>
<comment type="cofactor">
    <cofactor evidence="1">
        <name>Mn(2+)</name>
        <dbReference type="ChEBI" id="CHEBI:29035"/>
    </cofactor>
    <text evidence="1">Binds 2 manganese ions per subunit.</text>
</comment>
<comment type="subunit">
    <text evidence="1">Homohexamer.</text>
</comment>
<comment type="subcellular location">
    <subcellularLocation>
        <location evidence="1">Cytoplasm</location>
    </subcellularLocation>
</comment>
<comment type="similarity">
    <text evidence="1">Belongs to the peptidase M17 family.</text>
</comment>
<reference key="1">
    <citation type="journal article" date="2008" name="J. Bacteriol.">
        <title>Insights into the environmental resistance gene pool from the genome sequence of the multidrug-resistant environmental isolate Escherichia coli SMS-3-5.</title>
        <authorList>
            <person name="Fricke W.F."/>
            <person name="Wright M.S."/>
            <person name="Lindell A.H."/>
            <person name="Harkins D.M."/>
            <person name="Baker-Austin C."/>
            <person name="Ravel J."/>
            <person name="Stepanauskas R."/>
        </authorList>
    </citation>
    <scope>NUCLEOTIDE SEQUENCE [LARGE SCALE GENOMIC DNA]</scope>
    <source>
        <strain>SMS-3-5 / SECEC</strain>
    </source>
</reference>